<name>FSHB_PANTA</name>
<reference key="1">
    <citation type="journal article" date="2003" name="Biol. Reprod.">
        <title>Efficacy of porcine gonadotropins for repeated stimulation of ovarian activity for oocyte retrieval and in vitro embryo production and cryopreservation in Siberian tigers (Panthera tigris altaica).</title>
        <authorList>
            <person name="Crichton E.G."/>
            <person name="Bedows E."/>
            <person name="Miller-Lindholm A.K."/>
            <person name="Baldwin D.M."/>
            <person name="Armstrong D.L."/>
            <person name="Graham L.H."/>
            <person name="Ford J.J."/>
            <person name="Gjorret J.O."/>
            <person name="Hyttel P."/>
            <person name="Pope C.E."/>
            <person name="Vajta G."/>
            <person name="Loskutoff N.M."/>
        </authorList>
    </citation>
    <scope>NUCLEOTIDE SEQUENCE [MRNA]</scope>
    <source>
        <tissue>Pituitary</tissue>
    </source>
</reference>
<reference key="2">
    <citation type="submission" date="2002-08" db="EMBL/GenBank/DDBJ databases">
        <title>Cloning of follicle-stimulating hormone (FSH) and luteinizing hormone (LH) genes in Panthera tigris altaica.</title>
        <authorList>
            <person name="Liao M."/>
            <person name="Zhu M."/>
            <person name="Zhang A."/>
        </authorList>
    </citation>
    <scope>NUCLEOTIDE SEQUENCE [MRNA]</scope>
    <source>
        <tissue>Pituitary</tissue>
    </source>
</reference>
<organism>
    <name type="scientific">Panthera tigris altaica</name>
    <name type="common">Siberian tiger</name>
    <dbReference type="NCBI Taxonomy" id="74533"/>
    <lineage>
        <taxon>Eukaryota</taxon>
        <taxon>Metazoa</taxon>
        <taxon>Chordata</taxon>
        <taxon>Craniata</taxon>
        <taxon>Vertebrata</taxon>
        <taxon>Euteleostomi</taxon>
        <taxon>Mammalia</taxon>
        <taxon>Eutheria</taxon>
        <taxon>Laurasiatheria</taxon>
        <taxon>Carnivora</taxon>
        <taxon>Feliformia</taxon>
        <taxon>Felidae</taxon>
        <taxon>Pantherinae</taxon>
        <taxon>Panthera</taxon>
    </lineage>
</organism>
<keyword id="KW-1015">Disulfide bond</keyword>
<keyword id="KW-0325">Glycoprotein</keyword>
<keyword id="KW-0372">Hormone</keyword>
<keyword id="KW-1185">Reference proteome</keyword>
<keyword id="KW-0964">Secreted</keyword>
<keyword id="KW-0732">Signal</keyword>
<sequence>MKSVQFCFLFCCWRVICCKSCELTNITITVEKEECRFCMSINATWCAGYCYTRDLVYKDPARPNNQKTCTFKELVYETVKVPGCAHQADSLYTYPVATECHCGKCDSDSTDCTVQGLGPSYCSFSEMKE</sequence>
<proteinExistence type="evidence at transcript level"/>
<comment type="function">
    <text evidence="2">Together with the alpha chain CGA constitutes follitropin, the follicle-stimulating hormone, and provides its biological specificity to the hormone heterodimer. Binds FSHR, a G protein-coupled receptor, on target cells to activate downstream signaling pathways. Follitropin is involved in follicle development and spermatogenesis in reproductive organs.</text>
</comment>
<comment type="subunit">
    <text evidence="2">Heterodimer. The active follitropin is a heterodimer composed of an alpha chain/CGA shared with other hormones and a unique beta chain/FSHB shown here.</text>
</comment>
<comment type="subcellular location">
    <subcellularLocation>
        <location evidence="2">Secreted</location>
    </subcellularLocation>
    <text evidence="2">Efficient secretion requires dimerization with CGA.</text>
</comment>
<comment type="similarity">
    <text evidence="3">Belongs to the glycoprotein hormones subunit beta family.</text>
</comment>
<evidence type="ECO:0000250" key="1"/>
<evidence type="ECO:0000250" key="2">
    <source>
        <dbReference type="UniProtKB" id="P01225"/>
    </source>
</evidence>
<evidence type="ECO:0000305" key="3"/>
<accession>Q9BDJ0</accession>
<protein>
    <recommendedName>
        <fullName>Follitropin subunit beta</fullName>
    </recommendedName>
    <alternativeName>
        <fullName>Follicle-stimulating hormone beta subunit</fullName>
        <shortName>FSH-B</shortName>
        <shortName>FSH-beta</shortName>
    </alternativeName>
    <alternativeName>
        <fullName>Follitropin beta chain</fullName>
    </alternativeName>
</protein>
<feature type="signal peptide" evidence="1">
    <location>
        <begin position="1"/>
        <end position="18"/>
    </location>
</feature>
<feature type="chain" id="PRO_0000042862" description="Follitropin subunit beta">
    <location>
        <begin position="19"/>
        <end position="129"/>
    </location>
</feature>
<feature type="glycosylation site" description="N-linked (GlcNAc...) asparagine" evidence="2">
    <location>
        <position position="25"/>
    </location>
</feature>
<feature type="glycosylation site" description="N-linked (GlcNAc...) asparagine" evidence="2">
    <location>
        <position position="42"/>
    </location>
</feature>
<feature type="disulfide bond" evidence="2">
    <location>
        <begin position="21"/>
        <end position="69"/>
    </location>
</feature>
<feature type="disulfide bond" evidence="2">
    <location>
        <begin position="35"/>
        <end position="84"/>
    </location>
</feature>
<feature type="disulfide bond" evidence="2">
    <location>
        <begin position="38"/>
        <end position="122"/>
    </location>
</feature>
<feature type="disulfide bond" evidence="2">
    <location>
        <begin position="46"/>
        <end position="100"/>
    </location>
</feature>
<feature type="disulfide bond" evidence="2">
    <location>
        <begin position="50"/>
        <end position="102"/>
    </location>
</feature>
<feature type="disulfide bond" evidence="2">
    <location>
        <begin position="105"/>
        <end position="112"/>
    </location>
</feature>
<dbReference type="EMBL" id="AF354937">
    <property type="protein sequence ID" value="AAK30588.1"/>
    <property type="molecule type" value="mRNA"/>
</dbReference>
<dbReference type="EMBL" id="AF540937">
    <property type="protein sequence ID" value="AAN28381.1"/>
    <property type="molecule type" value="mRNA"/>
</dbReference>
<dbReference type="RefSeq" id="XP_007082072.1">
    <property type="nucleotide sequence ID" value="XM_007082010.1"/>
</dbReference>
<dbReference type="SMR" id="Q9BDJ0"/>
<dbReference type="GlyCosmos" id="Q9BDJ0">
    <property type="glycosylation" value="2 sites, No reported glycans"/>
</dbReference>
<dbReference type="Ensembl" id="ENSPTIT00000029662.1">
    <property type="protein sequence ID" value="ENSPTIP00000025150.1"/>
    <property type="gene ID" value="ENSPTIG00000021036.1"/>
</dbReference>
<dbReference type="GeneID" id="102970900"/>
<dbReference type="KEGG" id="ptg:102970900"/>
<dbReference type="GeneTree" id="ENSGT00940000160051"/>
<dbReference type="Proteomes" id="UP000675900">
    <property type="component" value="Unassembled WGS sequence"/>
</dbReference>
<dbReference type="GO" id="GO:0005737">
    <property type="term" value="C:cytoplasm"/>
    <property type="evidence" value="ECO:0007669"/>
    <property type="project" value="Ensembl"/>
</dbReference>
<dbReference type="GO" id="GO:0005615">
    <property type="term" value="C:extracellular space"/>
    <property type="evidence" value="ECO:0000250"/>
    <property type="project" value="UniProtKB"/>
</dbReference>
<dbReference type="GO" id="GO:0016914">
    <property type="term" value="C:follicle-stimulating hormone complex"/>
    <property type="evidence" value="ECO:0000250"/>
    <property type="project" value="UniProtKB"/>
</dbReference>
<dbReference type="GO" id="GO:0016913">
    <property type="term" value="F:follicle-stimulating hormone activity"/>
    <property type="evidence" value="ECO:0000250"/>
    <property type="project" value="UniProtKB"/>
</dbReference>
<dbReference type="GO" id="GO:0042699">
    <property type="term" value="P:follicle-stimulating hormone signaling pathway"/>
    <property type="evidence" value="ECO:0007669"/>
    <property type="project" value="TreeGrafter"/>
</dbReference>
<dbReference type="GO" id="GO:0007186">
    <property type="term" value="P:G protein-coupled receptor signaling pathway"/>
    <property type="evidence" value="ECO:0000250"/>
    <property type="project" value="UniProtKB"/>
</dbReference>
<dbReference type="GO" id="GO:0010893">
    <property type="term" value="P:positive regulation of steroid biosynthetic process"/>
    <property type="evidence" value="ECO:0007669"/>
    <property type="project" value="Ensembl"/>
</dbReference>
<dbReference type="GO" id="GO:0010469">
    <property type="term" value="P:regulation of signaling receptor activity"/>
    <property type="evidence" value="ECO:0000250"/>
    <property type="project" value="UniProtKB"/>
</dbReference>
<dbReference type="GO" id="GO:0007179">
    <property type="term" value="P:transforming growth factor beta receptor signaling pathway"/>
    <property type="evidence" value="ECO:0007669"/>
    <property type="project" value="Ensembl"/>
</dbReference>
<dbReference type="CDD" id="cd00069">
    <property type="entry name" value="GHB_like"/>
    <property type="match status" value="1"/>
</dbReference>
<dbReference type="FunFam" id="2.10.90.10:FF:000007">
    <property type="entry name" value="Luteinizing hormone beta subunit"/>
    <property type="match status" value="1"/>
</dbReference>
<dbReference type="Gene3D" id="2.10.90.10">
    <property type="entry name" value="Cystine-knot cytokines"/>
    <property type="match status" value="1"/>
</dbReference>
<dbReference type="InterPro" id="IPR029034">
    <property type="entry name" value="Cystine-knot_cytokine"/>
</dbReference>
<dbReference type="InterPro" id="IPR006208">
    <property type="entry name" value="Glyco_hormone_CN"/>
</dbReference>
<dbReference type="InterPro" id="IPR001545">
    <property type="entry name" value="Gonadotropin_bsu"/>
</dbReference>
<dbReference type="InterPro" id="IPR018245">
    <property type="entry name" value="Gonadotropin_bsu_CS"/>
</dbReference>
<dbReference type="PANTHER" id="PTHR11515:SF17">
    <property type="entry name" value="FOLLITROPIN SUBUNIT BETA"/>
    <property type="match status" value="1"/>
</dbReference>
<dbReference type="PANTHER" id="PTHR11515">
    <property type="entry name" value="GLYCOPROTEIN HORMONE BETA CHAIN"/>
    <property type="match status" value="1"/>
</dbReference>
<dbReference type="Pfam" id="PF00007">
    <property type="entry name" value="Cys_knot"/>
    <property type="match status" value="1"/>
</dbReference>
<dbReference type="SMART" id="SM00068">
    <property type="entry name" value="GHB"/>
    <property type="match status" value="1"/>
</dbReference>
<dbReference type="SUPFAM" id="SSF57501">
    <property type="entry name" value="Cystine-knot cytokines"/>
    <property type="match status" value="1"/>
</dbReference>
<dbReference type="PROSITE" id="PS00261">
    <property type="entry name" value="GLYCO_HORMONE_BETA_1"/>
    <property type="match status" value="1"/>
</dbReference>
<dbReference type="PROSITE" id="PS00689">
    <property type="entry name" value="GLYCO_HORMONE_BETA_2"/>
    <property type="match status" value="1"/>
</dbReference>
<gene>
    <name type="primary">FSHB</name>
</gene>